<reference key="1">
    <citation type="journal article" date="2000" name="Proc. Natl. Acad. Sci. U.S.A.">
        <title>Multiplication of antenna genes as a major adaptation to low light in a marine prokaryote.</title>
        <authorList>
            <person name="Garczarek L."/>
            <person name="Hess W.R."/>
            <person name="Holtzendorff J."/>
            <person name="van der Staay G.W.M."/>
            <person name="Partensky F."/>
        </authorList>
    </citation>
    <scope>NUCLEOTIDE SEQUENCE [GENOMIC DNA]</scope>
    <scope>FUNCTION</scope>
    <source>
        <strain>SARG / CCMP1375 / SS120</strain>
    </source>
</reference>
<reference key="2">
    <citation type="journal article" date="2003" name="Proc. Natl. Acad. Sci. U.S.A.">
        <title>Genome sequence of the cyanobacterium Prochlorococcus marinus SS120, a nearly minimal oxyphototrophic genome.</title>
        <authorList>
            <person name="Dufresne A."/>
            <person name="Salanoubat M."/>
            <person name="Partensky F."/>
            <person name="Artiguenave F."/>
            <person name="Axmann I.M."/>
            <person name="Barbe V."/>
            <person name="Duprat S."/>
            <person name="Galperin M.Y."/>
            <person name="Koonin E.V."/>
            <person name="Le Gall F."/>
            <person name="Makarova K.S."/>
            <person name="Ostrowski M."/>
            <person name="Oztas S."/>
            <person name="Robert C."/>
            <person name="Rogozin I.B."/>
            <person name="Scanlan D.J."/>
            <person name="Tandeau de Marsac N."/>
            <person name="Weissenbach J."/>
            <person name="Wincker P."/>
            <person name="Wolf Y.I."/>
            <person name="Hess W.R."/>
        </authorList>
    </citation>
    <scope>NUCLEOTIDE SEQUENCE [LARGE SCALE GENOMIC DNA]</scope>
    <source>
        <strain>SARG / CCMP1375 / SS120</strain>
    </source>
</reference>
<reference key="3">
    <citation type="journal article" date="1997" name="Photosyn. Res.">
        <title>The divinyl-chlorophyll a/b-protein complexes of two strains of the oxyphototrophic marine prokaryote Prochlorococcus -- characterization and response to changes in growth irradiance.</title>
        <authorList>
            <person name="Partensky F."/>
            <person name="La Roche J."/>
            <person name="Wyman K."/>
            <person name="Falkowski P.G."/>
        </authorList>
    </citation>
    <scope>FUNCTION</scope>
    <scope>COFACTOR</scope>
    <scope>SUBUNIT</scope>
    <scope>SUBCELLULAR LOCATION</scope>
    <source>
        <strain>SARG / CCMP1375 / SS120</strain>
    </source>
</reference>
<reference key="4">
    <citation type="journal article" date="2001" name="Plant Mol. Biol.">
        <title>Expression and phylogeny of the multiple antenna genes of the low-light-adapted strain Prochlorococcus marinus SS120 (Oxyphotobacteria).</title>
        <authorList>
            <person name="Garczarek L."/>
            <person name="van der Staay G.W.M."/>
            <person name="Hess W.R."/>
            <person name="Le Gall F."/>
            <person name="Partensky F."/>
        </authorList>
    </citation>
    <scope>INDUCTION</scope>
    <source>
        <strain>SARG / CCMP1375 / SS120</strain>
    </source>
</reference>
<reference key="5">
    <citation type="journal article" date="2003" name="Nature">
        <title>Low-light-adapted Prochlorococcus species possess specific antennae for each photosystem.</title>
        <authorList>
            <person name="Bibby T.S."/>
            <person name="Mary I."/>
            <person name="Nield J."/>
            <person name="Partensky F."/>
            <person name="Barber J."/>
        </authorList>
    </citation>
    <scope>REPRESSION UNDER IRON-STARVATION</scope>
    <source>
        <strain>SARG / CCMP1375 / SS120</strain>
    </source>
</reference>
<feature type="chain" id="PRO_0000077542" description="Divinyl chlorophyll a/b light-harvesting protein PcbE">
    <location>
        <begin position="1"/>
        <end position="361"/>
    </location>
</feature>
<feature type="transmembrane region" description="Helical" evidence="3">
    <location>
        <begin position="27"/>
        <end position="47"/>
    </location>
</feature>
<feature type="transmembrane region" description="Helical" evidence="3">
    <location>
        <begin position="88"/>
        <end position="108"/>
    </location>
</feature>
<feature type="transmembrane region" description="Helical" evidence="3">
    <location>
        <begin position="149"/>
        <end position="169"/>
    </location>
</feature>
<feature type="transmembrane region" description="Helical" evidence="3">
    <location>
        <begin position="210"/>
        <end position="230"/>
    </location>
</feature>
<feature type="transmembrane region" description="Helical" evidence="3">
    <location>
        <begin position="250"/>
        <end position="270"/>
    </location>
</feature>
<feature type="transmembrane region" description="Helical" evidence="3">
    <location>
        <begin position="315"/>
        <end position="335"/>
    </location>
</feature>
<name>PCBE_PROMA</name>
<evidence type="ECO:0000250" key="1"/>
<evidence type="ECO:0000250" key="2">
    <source>
        <dbReference type="UniProtKB" id="Q6Q972"/>
    </source>
</evidence>
<evidence type="ECO:0000255" key="3"/>
<evidence type="ECO:0000269" key="4">
    <source>
    </source>
</evidence>
<evidence type="ECO:0000269" key="5">
    <source>
    </source>
</evidence>
<evidence type="ECO:0000269" key="6">
    <source ref="3"/>
</evidence>
<evidence type="ECO:0000303" key="7">
    <source>
    </source>
</evidence>
<evidence type="ECO:0000303" key="8">
    <source>
    </source>
</evidence>
<evidence type="ECO:0000303" key="9">
    <source>
    </source>
</evidence>
<evidence type="ECO:0000303" key="10">
    <source ref="3"/>
</evidence>
<evidence type="ECO:0000305" key="11"/>
<sequence length="361" mass="40107">MQTYGNPDPTYGWWVGNSVVTNKSSRFIGSHVAHTGLIAFTAGANTLWELARFNPDIPMGHQGMVSIPHLASLGIGFDQAGAWTGQDVAFVGIFHLICSFVYALAGLLHSVIFSEDTQNSSGLFADGRPEHRQAARFKLEWDNPDNQTFILGHHLVFFGVANIWFVEWARVHGIYDPAIEAIRQVNYNLDLTQIWNHQFDFIQIDSLEDVMGGHAFLAFFQIGGGAFHIATKQIGTYTNFKGAGLLSAEAVLSWSLAGIGWMAIIAAFWCATNTTVYPEAWYGETLQLKFGISPYWIDTGNMDGVVTGHTSRAWLSNVHYYLGFFFIQGHLWHAIRAMGFDFRKVTSAVANLDNSRITLSD</sequence>
<accession>Q9L8M2</accession>
<accession>Q7BWH4</accession>
<organism>
    <name type="scientific">Prochlorococcus marinus (strain SARG / CCMP1375 / SS120)</name>
    <dbReference type="NCBI Taxonomy" id="167539"/>
    <lineage>
        <taxon>Bacteria</taxon>
        <taxon>Bacillati</taxon>
        <taxon>Cyanobacteriota</taxon>
        <taxon>Cyanophyceae</taxon>
        <taxon>Synechococcales</taxon>
        <taxon>Prochlorococcaceae</taxon>
        <taxon>Prochlorococcus</taxon>
    </lineage>
</organism>
<keyword id="KW-0148">Chlorophyll</keyword>
<keyword id="KW-0157">Chromophore</keyword>
<keyword id="KW-0472">Membrane</keyword>
<keyword id="KW-0602">Photosynthesis</keyword>
<keyword id="KW-0603">Photosystem I</keyword>
<keyword id="KW-0604">Photosystem II</keyword>
<keyword id="KW-1185">Reference proteome</keyword>
<keyword id="KW-0793">Thylakoid</keyword>
<keyword id="KW-0812">Transmembrane</keyword>
<keyword id="KW-1133">Transmembrane helix</keyword>
<dbReference type="EMBL" id="AF198529">
    <property type="protein sequence ID" value="AAF61304.1"/>
    <property type="molecule type" value="Genomic_DNA"/>
</dbReference>
<dbReference type="EMBL" id="AE017126">
    <property type="protein sequence ID" value="AAQ00494.1"/>
    <property type="molecule type" value="Genomic_DNA"/>
</dbReference>
<dbReference type="RefSeq" id="NP_875841.1">
    <property type="nucleotide sequence ID" value="NC_005042.1"/>
</dbReference>
<dbReference type="RefSeq" id="WP_011125601.1">
    <property type="nucleotide sequence ID" value="NC_005042.1"/>
</dbReference>
<dbReference type="SMR" id="Q9L8M2"/>
<dbReference type="STRING" id="167539.Pro_1450"/>
<dbReference type="EnsemblBacteria" id="AAQ00494">
    <property type="protein sequence ID" value="AAQ00494"/>
    <property type="gene ID" value="Pro_1450"/>
</dbReference>
<dbReference type="KEGG" id="pma:Pro_1450"/>
<dbReference type="PATRIC" id="fig|167539.5.peg.1520"/>
<dbReference type="eggNOG" id="ENOG5030XKS">
    <property type="taxonomic scope" value="Bacteria"/>
</dbReference>
<dbReference type="HOGENOM" id="CLU_028310_0_0_3"/>
<dbReference type="OrthoDB" id="9429529at2"/>
<dbReference type="Proteomes" id="UP000001420">
    <property type="component" value="Chromosome"/>
</dbReference>
<dbReference type="GO" id="GO:0009522">
    <property type="term" value="C:photosystem I"/>
    <property type="evidence" value="ECO:0007669"/>
    <property type="project" value="UniProtKB-KW"/>
</dbReference>
<dbReference type="GO" id="GO:0009523">
    <property type="term" value="C:photosystem II"/>
    <property type="evidence" value="ECO:0007669"/>
    <property type="project" value="UniProtKB-KW"/>
</dbReference>
<dbReference type="GO" id="GO:0031676">
    <property type="term" value="C:plasma membrane-derived thylakoid membrane"/>
    <property type="evidence" value="ECO:0007669"/>
    <property type="project" value="UniProtKB-SubCell"/>
</dbReference>
<dbReference type="GO" id="GO:0016168">
    <property type="term" value="F:chlorophyll binding"/>
    <property type="evidence" value="ECO:0007669"/>
    <property type="project" value="UniProtKB-KW"/>
</dbReference>
<dbReference type="GO" id="GO:0009767">
    <property type="term" value="P:photosynthetic electron transport chain"/>
    <property type="evidence" value="ECO:0007669"/>
    <property type="project" value="InterPro"/>
</dbReference>
<dbReference type="InterPro" id="IPR000932">
    <property type="entry name" value="PS_antenna-like"/>
</dbReference>
<dbReference type="InterPro" id="IPR036001">
    <property type="entry name" value="PS_II_antenna-like_sf"/>
</dbReference>
<dbReference type="NCBIfam" id="TIGR03041">
    <property type="entry name" value="PS_antenn_a_b"/>
    <property type="match status" value="1"/>
</dbReference>
<dbReference type="Pfam" id="PF00421">
    <property type="entry name" value="PSII"/>
    <property type="match status" value="1"/>
</dbReference>
<dbReference type="SUPFAM" id="SSF161077">
    <property type="entry name" value="Photosystem II antenna protein-like"/>
    <property type="match status" value="1"/>
</dbReference>
<comment type="function">
    <text evidence="2 7 10">The antenna complex functions as a light receptor, it captures and delivers excitation energy to photosystems II and I. The Prochlorales pcb genes are not related to higher plant LHCs.</text>
</comment>
<comment type="cofactor">
    <cofactor evidence="10">
        <name>divinyl chlorophyll a</name>
        <dbReference type="ChEBI" id="CHEBI:73095"/>
    </cofactor>
</comment>
<comment type="cofactor">
    <cofactor evidence="10">
        <name>divinyl chlorophyll b</name>
        <dbReference type="ChEBI" id="CHEBI:73096"/>
    </cofactor>
</comment>
<comment type="subunit">
    <text evidence="6">The antenna complex consists of divinyl chlorophylls (a and b) and divinyl chlorophyll a/b binding proteins and binds more divinyl chlorophyll b than does the antenna complex from high-light-adapted Prochlorococcus.</text>
</comment>
<comment type="subcellular location">
    <subcellularLocation>
        <location evidence="6">Cellular thylakoid membrane</location>
        <topology evidence="1">Multi-pass membrane protein</topology>
    </subcellularLocation>
</comment>
<comment type="induction">
    <text evidence="4 5">This transcript is strongly expressed between 4.5 and 72 umol blue light/m2/s. The whole antenna complex is most highly expressed under low light; as the light levels increase antenna complex levels decrease. Thus at least in this strain the amount of antenna complex is controlled mostly at a post-transcriptional level. Transcription decreases upon iron starvation.</text>
</comment>
<comment type="miscellaneous">
    <text evidence="8 9">This low-light-adapted strain contains 8 pcb genes.</text>
</comment>
<comment type="similarity">
    <text evidence="11">Belongs to the PsbB/PsbC family. IsiA/Pcb subfamily.</text>
</comment>
<gene>
    <name type="primary">pcbE</name>
    <name type="ordered locus">Pro_1450</name>
</gene>
<protein>
    <recommendedName>
        <fullName>Divinyl chlorophyll a/b light-harvesting protein PcbE</fullName>
    </recommendedName>
</protein>
<proteinExistence type="evidence at protein level"/>